<dbReference type="EMBL" id="AF222894">
    <property type="protein sequence ID" value="AAF30654.1"/>
    <property type="molecule type" value="Genomic_DNA"/>
</dbReference>
<dbReference type="RefSeq" id="WP_004025683.1">
    <property type="nucleotide sequence ID" value="NC_002162.1"/>
</dbReference>
<dbReference type="SMR" id="Q9PQP6"/>
<dbReference type="STRING" id="273119.UU245"/>
<dbReference type="EnsemblBacteria" id="AAF30654">
    <property type="protein sequence ID" value="AAF30654"/>
    <property type="gene ID" value="UU245"/>
</dbReference>
<dbReference type="GeneID" id="93848720"/>
<dbReference type="KEGG" id="uur:UU245"/>
<dbReference type="eggNOG" id="COG0096">
    <property type="taxonomic scope" value="Bacteria"/>
</dbReference>
<dbReference type="HOGENOM" id="CLU_098428_0_2_14"/>
<dbReference type="OrthoDB" id="9802617at2"/>
<dbReference type="Proteomes" id="UP000000423">
    <property type="component" value="Chromosome"/>
</dbReference>
<dbReference type="GO" id="GO:1990904">
    <property type="term" value="C:ribonucleoprotein complex"/>
    <property type="evidence" value="ECO:0007669"/>
    <property type="project" value="UniProtKB-KW"/>
</dbReference>
<dbReference type="GO" id="GO:0005840">
    <property type="term" value="C:ribosome"/>
    <property type="evidence" value="ECO:0007669"/>
    <property type="project" value="UniProtKB-KW"/>
</dbReference>
<dbReference type="GO" id="GO:0019843">
    <property type="term" value="F:rRNA binding"/>
    <property type="evidence" value="ECO:0007669"/>
    <property type="project" value="UniProtKB-UniRule"/>
</dbReference>
<dbReference type="GO" id="GO:0003735">
    <property type="term" value="F:structural constituent of ribosome"/>
    <property type="evidence" value="ECO:0007669"/>
    <property type="project" value="InterPro"/>
</dbReference>
<dbReference type="GO" id="GO:0006412">
    <property type="term" value="P:translation"/>
    <property type="evidence" value="ECO:0007669"/>
    <property type="project" value="UniProtKB-UniRule"/>
</dbReference>
<dbReference type="FunFam" id="3.30.1490.10:FF:000001">
    <property type="entry name" value="30S ribosomal protein S8"/>
    <property type="match status" value="1"/>
</dbReference>
<dbReference type="Gene3D" id="3.30.1370.30">
    <property type="match status" value="1"/>
</dbReference>
<dbReference type="Gene3D" id="3.30.1490.10">
    <property type="match status" value="1"/>
</dbReference>
<dbReference type="HAMAP" id="MF_01302_B">
    <property type="entry name" value="Ribosomal_uS8_B"/>
    <property type="match status" value="1"/>
</dbReference>
<dbReference type="InterPro" id="IPR000630">
    <property type="entry name" value="Ribosomal_uS8"/>
</dbReference>
<dbReference type="InterPro" id="IPR047863">
    <property type="entry name" value="Ribosomal_uS8_CS"/>
</dbReference>
<dbReference type="InterPro" id="IPR035987">
    <property type="entry name" value="Ribosomal_uS8_sf"/>
</dbReference>
<dbReference type="NCBIfam" id="NF001109">
    <property type="entry name" value="PRK00136.1"/>
    <property type="match status" value="1"/>
</dbReference>
<dbReference type="PANTHER" id="PTHR11758">
    <property type="entry name" value="40S RIBOSOMAL PROTEIN S15A"/>
    <property type="match status" value="1"/>
</dbReference>
<dbReference type="Pfam" id="PF00410">
    <property type="entry name" value="Ribosomal_S8"/>
    <property type="match status" value="1"/>
</dbReference>
<dbReference type="SUPFAM" id="SSF56047">
    <property type="entry name" value="Ribosomal protein S8"/>
    <property type="match status" value="1"/>
</dbReference>
<dbReference type="PROSITE" id="PS00053">
    <property type="entry name" value="RIBOSOMAL_S8"/>
    <property type="match status" value="1"/>
</dbReference>
<keyword id="KW-1185">Reference proteome</keyword>
<keyword id="KW-0687">Ribonucleoprotein</keyword>
<keyword id="KW-0689">Ribosomal protein</keyword>
<keyword id="KW-0694">RNA-binding</keyword>
<keyword id="KW-0699">rRNA-binding</keyword>
<gene>
    <name evidence="1" type="primary">rpsH</name>
    <name evidence="1" type="synonym">rps8</name>
    <name type="ordered locus">UU245</name>
</gene>
<sequence length="132" mass="14681">MYLDPIAELITKINNGRKAHKAEVSFATSKLKTAILELLVKEGYIKSYDIRPTENNKSETVVKLKYKNQTTSSINGFKQISKPGLRIYSTHLNLPKVLNGLGIAIITTSKGVMSDKQARKENVGGEVIAYVW</sequence>
<feature type="chain" id="PRO_0000126518" description="Small ribosomal subunit protein uS8">
    <location>
        <begin position="1"/>
        <end position="132"/>
    </location>
</feature>
<proteinExistence type="inferred from homology"/>
<organism>
    <name type="scientific">Ureaplasma parvum serovar 3 (strain ATCC 700970)</name>
    <dbReference type="NCBI Taxonomy" id="273119"/>
    <lineage>
        <taxon>Bacteria</taxon>
        <taxon>Bacillati</taxon>
        <taxon>Mycoplasmatota</taxon>
        <taxon>Mycoplasmoidales</taxon>
        <taxon>Mycoplasmoidaceae</taxon>
        <taxon>Ureaplasma</taxon>
    </lineage>
</organism>
<accession>Q9PQP6</accession>
<reference key="1">
    <citation type="journal article" date="2000" name="Nature">
        <title>The complete sequence of the mucosal pathogen Ureaplasma urealyticum.</title>
        <authorList>
            <person name="Glass J.I."/>
            <person name="Lefkowitz E.J."/>
            <person name="Glass J.S."/>
            <person name="Heiner C.R."/>
            <person name="Chen E.Y."/>
            <person name="Cassell G.H."/>
        </authorList>
    </citation>
    <scope>NUCLEOTIDE SEQUENCE [LARGE SCALE GENOMIC DNA]</scope>
    <source>
        <strain>ATCC 700970</strain>
    </source>
</reference>
<comment type="function">
    <text evidence="1">One of the primary rRNA binding proteins, it binds directly to 16S rRNA central domain where it helps coordinate assembly of the platform of the 30S subunit.</text>
</comment>
<comment type="subunit">
    <text evidence="1">Part of the 30S ribosomal subunit. Contacts proteins S5 and S12.</text>
</comment>
<comment type="similarity">
    <text evidence="1">Belongs to the universal ribosomal protein uS8 family.</text>
</comment>
<protein>
    <recommendedName>
        <fullName evidence="1">Small ribosomal subunit protein uS8</fullName>
    </recommendedName>
    <alternativeName>
        <fullName evidence="2">30S ribosomal protein S8</fullName>
    </alternativeName>
</protein>
<name>RS8_UREPA</name>
<evidence type="ECO:0000255" key="1">
    <source>
        <dbReference type="HAMAP-Rule" id="MF_01302"/>
    </source>
</evidence>
<evidence type="ECO:0000305" key="2"/>